<reference key="1">
    <citation type="journal article" date="1999" name="Nat. Genet.">
        <title>The pallid gene encodes a novel, syntaxin 13-interacting protein involved in platelet storage pool deficiency.</title>
        <authorList>
            <person name="Huang L."/>
            <person name="Kuo Y.-M."/>
            <person name="Gitschier J."/>
        </authorList>
    </citation>
    <scope>NUCLEOTIDE SEQUENCE [GENOMIC DNA / MRNA] (ISOFORM 1)</scope>
    <scope>TISSUE SPECIFICITY</scope>
    <scope>INTERACTION WITH STX12</scope>
    <scope>ALTERNATIVE SPLICING</scope>
    <scope>DISEASE</scope>
    <scope>VARIANTS MET-14 AND MET-32</scope>
    <source>
        <strain>C57BL/6J</strain>
        <tissue>Brain</tissue>
    </source>
</reference>
<reference key="2">
    <citation type="journal article" date="2005" name="Science">
        <title>The transcriptional landscape of the mammalian genome.</title>
        <authorList>
            <person name="Carninci P."/>
            <person name="Kasukawa T."/>
            <person name="Katayama S."/>
            <person name="Gough J."/>
            <person name="Frith M.C."/>
            <person name="Maeda N."/>
            <person name="Oyama R."/>
            <person name="Ravasi T."/>
            <person name="Lenhard B."/>
            <person name="Wells C."/>
            <person name="Kodzius R."/>
            <person name="Shimokawa K."/>
            <person name="Bajic V.B."/>
            <person name="Brenner S.E."/>
            <person name="Batalov S."/>
            <person name="Forrest A.R."/>
            <person name="Zavolan M."/>
            <person name="Davis M.J."/>
            <person name="Wilming L.G."/>
            <person name="Aidinis V."/>
            <person name="Allen J.E."/>
            <person name="Ambesi-Impiombato A."/>
            <person name="Apweiler R."/>
            <person name="Aturaliya R.N."/>
            <person name="Bailey T.L."/>
            <person name="Bansal M."/>
            <person name="Baxter L."/>
            <person name="Beisel K.W."/>
            <person name="Bersano T."/>
            <person name="Bono H."/>
            <person name="Chalk A.M."/>
            <person name="Chiu K.P."/>
            <person name="Choudhary V."/>
            <person name="Christoffels A."/>
            <person name="Clutterbuck D.R."/>
            <person name="Crowe M.L."/>
            <person name="Dalla E."/>
            <person name="Dalrymple B.P."/>
            <person name="de Bono B."/>
            <person name="Della Gatta G."/>
            <person name="di Bernardo D."/>
            <person name="Down T."/>
            <person name="Engstrom P."/>
            <person name="Fagiolini M."/>
            <person name="Faulkner G."/>
            <person name="Fletcher C.F."/>
            <person name="Fukushima T."/>
            <person name="Furuno M."/>
            <person name="Futaki S."/>
            <person name="Gariboldi M."/>
            <person name="Georgii-Hemming P."/>
            <person name="Gingeras T.R."/>
            <person name="Gojobori T."/>
            <person name="Green R.E."/>
            <person name="Gustincich S."/>
            <person name="Harbers M."/>
            <person name="Hayashi Y."/>
            <person name="Hensch T.K."/>
            <person name="Hirokawa N."/>
            <person name="Hill D."/>
            <person name="Huminiecki L."/>
            <person name="Iacono M."/>
            <person name="Ikeo K."/>
            <person name="Iwama A."/>
            <person name="Ishikawa T."/>
            <person name="Jakt M."/>
            <person name="Kanapin A."/>
            <person name="Katoh M."/>
            <person name="Kawasawa Y."/>
            <person name="Kelso J."/>
            <person name="Kitamura H."/>
            <person name="Kitano H."/>
            <person name="Kollias G."/>
            <person name="Krishnan S.P."/>
            <person name="Kruger A."/>
            <person name="Kummerfeld S.K."/>
            <person name="Kurochkin I.V."/>
            <person name="Lareau L.F."/>
            <person name="Lazarevic D."/>
            <person name="Lipovich L."/>
            <person name="Liu J."/>
            <person name="Liuni S."/>
            <person name="McWilliam S."/>
            <person name="Madan Babu M."/>
            <person name="Madera M."/>
            <person name="Marchionni L."/>
            <person name="Matsuda H."/>
            <person name="Matsuzawa S."/>
            <person name="Miki H."/>
            <person name="Mignone F."/>
            <person name="Miyake S."/>
            <person name="Morris K."/>
            <person name="Mottagui-Tabar S."/>
            <person name="Mulder N."/>
            <person name="Nakano N."/>
            <person name="Nakauchi H."/>
            <person name="Ng P."/>
            <person name="Nilsson R."/>
            <person name="Nishiguchi S."/>
            <person name="Nishikawa S."/>
            <person name="Nori F."/>
            <person name="Ohara O."/>
            <person name="Okazaki Y."/>
            <person name="Orlando V."/>
            <person name="Pang K.C."/>
            <person name="Pavan W.J."/>
            <person name="Pavesi G."/>
            <person name="Pesole G."/>
            <person name="Petrovsky N."/>
            <person name="Piazza S."/>
            <person name="Reed J."/>
            <person name="Reid J.F."/>
            <person name="Ring B.Z."/>
            <person name="Ringwald M."/>
            <person name="Rost B."/>
            <person name="Ruan Y."/>
            <person name="Salzberg S.L."/>
            <person name="Sandelin A."/>
            <person name="Schneider C."/>
            <person name="Schoenbach C."/>
            <person name="Sekiguchi K."/>
            <person name="Semple C.A."/>
            <person name="Seno S."/>
            <person name="Sessa L."/>
            <person name="Sheng Y."/>
            <person name="Shibata Y."/>
            <person name="Shimada H."/>
            <person name="Shimada K."/>
            <person name="Silva D."/>
            <person name="Sinclair B."/>
            <person name="Sperling S."/>
            <person name="Stupka E."/>
            <person name="Sugiura K."/>
            <person name="Sultana R."/>
            <person name="Takenaka Y."/>
            <person name="Taki K."/>
            <person name="Tammoja K."/>
            <person name="Tan S.L."/>
            <person name="Tang S."/>
            <person name="Taylor M.S."/>
            <person name="Tegner J."/>
            <person name="Teichmann S.A."/>
            <person name="Ueda H.R."/>
            <person name="van Nimwegen E."/>
            <person name="Verardo R."/>
            <person name="Wei C.L."/>
            <person name="Yagi K."/>
            <person name="Yamanishi H."/>
            <person name="Zabarovsky E."/>
            <person name="Zhu S."/>
            <person name="Zimmer A."/>
            <person name="Hide W."/>
            <person name="Bult C."/>
            <person name="Grimmond S.M."/>
            <person name="Teasdale R.D."/>
            <person name="Liu E.T."/>
            <person name="Brusic V."/>
            <person name="Quackenbush J."/>
            <person name="Wahlestedt C."/>
            <person name="Mattick J.S."/>
            <person name="Hume D.A."/>
            <person name="Kai C."/>
            <person name="Sasaki D."/>
            <person name="Tomaru Y."/>
            <person name="Fukuda S."/>
            <person name="Kanamori-Katayama M."/>
            <person name="Suzuki M."/>
            <person name="Aoki J."/>
            <person name="Arakawa T."/>
            <person name="Iida J."/>
            <person name="Imamura K."/>
            <person name="Itoh M."/>
            <person name="Kato T."/>
            <person name="Kawaji H."/>
            <person name="Kawagashira N."/>
            <person name="Kawashima T."/>
            <person name="Kojima M."/>
            <person name="Kondo S."/>
            <person name="Konno H."/>
            <person name="Nakano K."/>
            <person name="Ninomiya N."/>
            <person name="Nishio T."/>
            <person name="Okada M."/>
            <person name="Plessy C."/>
            <person name="Shibata K."/>
            <person name="Shiraki T."/>
            <person name="Suzuki S."/>
            <person name="Tagami M."/>
            <person name="Waki K."/>
            <person name="Watahiki A."/>
            <person name="Okamura-Oho Y."/>
            <person name="Suzuki H."/>
            <person name="Kawai J."/>
            <person name="Hayashizaki Y."/>
        </authorList>
    </citation>
    <scope>NUCLEOTIDE SEQUENCE [LARGE SCALE MRNA] (ISOFORM 1)</scope>
    <source>
        <strain>C57BL/6J</strain>
        <tissue>Heart</tissue>
        <tissue>Hypothalamus</tissue>
    </source>
</reference>
<reference key="3">
    <citation type="journal article" date="2009" name="PLoS Biol.">
        <title>Lineage-specific biology revealed by a finished genome assembly of the mouse.</title>
        <authorList>
            <person name="Church D.M."/>
            <person name="Goodstadt L."/>
            <person name="Hillier L.W."/>
            <person name="Zody M.C."/>
            <person name="Goldstein S."/>
            <person name="She X."/>
            <person name="Bult C.J."/>
            <person name="Agarwala R."/>
            <person name="Cherry J.L."/>
            <person name="DiCuccio M."/>
            <person name="Hlavina W."/>
            <person name="Kapustin Y."/>
            <person name="Meric P."/>
            <person name="Maglott D."/>
            <person name="Birtle Z."/>
            <person name="Marques A.C."/>
            <person name="Graves T."/>
            <person name="Zhou S."/>
            <person name="Teague B."/>
            <person name="Potamousis K."/>
            <person name="Churas C."/>
            <person name="Place M."/>
            <person name="Herschleb J."/>
            <person name="Runnheim R."/>
            <person name="Forrest D."/>
            <person name="Amos-Landgraf J."/>
            <person name="Schwartz D.C."/>
            <person name="Cheng Z."/>
            <person name="Lindblad-Toh K."/>
            <person name="Eichler E.E."/>
            <person name="Ponting C.P."/>
        </authorList>
    </citation>
    <scope>NUCLEOTIDE SEQUENCE [LARGE SCALE GENOMIC DNA]</scope>
    <source>
        <strain>C57BL/6J</strain>
    </source>
</reference>
<reference key="4">
    <citation type="journal article" date="2004" name="Genome Res.">
        <title>The status, quality, and expansion of the NIH full-length cDNA project: the Mammalian Gene Collection (MGC).</title>
        <authorList>
            <consortium name="The MGC Project Team"/>
        </authorList>
    </citation>
    <scope>NUCLEOTIDE SEQUENCE [LARGE SCALE MRNA] (ISOFORM 2)</scope>
    <scope>VARIANT MET-32</scope>
    <source>
        <tissue>Mammary tumor</tissue>
    </source>
</reference>
<reference key="5">
    <citation type="journal article" date="2002" name="Pigment Cell Res.">
        <title>The pallidin (Pldn) gene and the role of SNARE proteins in melanosome biogenesis.</title>
        <authorList>
            <person name="Falcon-Perez J.M."/>
            <person name="Dell'Angelica E.C."/>
        </authorList>
    </citation>
    <scope>REVIEW</scope>
    <scope>ALTERNATIVE SPLICING</scope>
</reference>
<reference key="6">
    <citation type="journal article" date="2002" name="J. Biol. Chem.">
        <title>BLOC-1, a novel complex containing the pallidin and muted proteins involved in the biogenesis of melanosomes and platelet-dense granules.</title>
        <authorList>
            <person name="Falcon-Perez J.M."/>
            <person name="Starcevic M."/>
            <person name="Gautam R."/>
            <person name="Dell'Angelica E.C."/>
        </authorList>
    </citation>
    <scope>TISSUE SPECIFICITY</scope>
    <scope>INTERACTION WITH F-ACTIN</scope>
    <scope>HOMODIMERIZATION</scope>
</reference>
<reference key="7">
    <citation type="journal article" date="2002" name="Traffic">
        <title>Pallidin is a component of a multi-protein complex involved in the biogenesis of lysosome-related organelles.</title>
        <authorList>
            <person name="Moriyama K."/>
            <person name="Bonifacino J.S."/>
        </authorList>
    </citation>
    <scope>TISSUE SPECIFICITY</scope>
</reference>
<reference key="8">
    <citation type="journal article" date="2003" name="Blood">
        <title>Cappuccino, a mouse model of Hermansky-Pudlak syndrome, encodes a novel protein that is part of the pallidin-muted complex (BLOC-1).</title>
        <authorList>
            <person name="Ciciotte S.L."/>
            <person name="Gwynn B."/>
            <person name="Moriyama K."/>
            <person name="Huizing M."/>
            <person name="Gahl W.A."/>
            <person name="Bonifacino J.S."/>
            <person name="Peters L.L."/>
        </authorList>
    </citation>
    <scope>IDENTIFICATION IN THE BLOC-1 COMPLEX</scope>
    <scope>INTERACTION WITH BLOC1S4 AND BLOC1S5</scope>
</reference>
<reference key="9">
    <citation type="journal article" date="2003" name="Nat. Genet.">
        <title>Hermansky-Pudlak syndrome type 7 (HPS-7) results from mutant dysbindin, a member of the biogenesis of lysosome-related organelles complex 1 (BLOC-1).</title>
        <authorList>
            <person name="Li W."/>
            <person name="Zhang Q."/>
            <person name="Oiso N."/>
            <person name="Novak E.K."/>
            <person name="Gautam R."/>
            <person name="O'Brien E.P."/>
            <person name="Tinsley C.L."/>
            <person name="Blake D.J."/>
            <person name="Spritz R.A."/>
            <person name="Copeland N.G."/>
            <person name="Jenkins N.A."/>
            <person name="Amato D."/>
            <person name="Roe B.A."/>
            <person name="Starcevic M."/>
            <person name="Dell'Angelica E.C."/>
            <person name="Elliott R.W."/>
            <person name="Mishra V."/>
            <person name="Kingsmore S.F."/>
            <person name="Paylor R.E."/>
            <person name="Swank R.T."/>
        </authorList>
    </citation>
    <scope>INTERACTION WITH DTNBP1</scope>
</reference>
<reference key="10">
    <citation type="journal article" date="2006" name="Mol. Biol. Cell">
        <title>BLOC-1 complex deficiency alters the targeting of adaptor protein complex-3 cargoes.</title>
        <authorList>
            <person name="Salazar G."/>
            <person name="Craige B."/>
            <person name="Styers M.L."/>
            <person name="Newell-Litwa K.A."/>
            <person name="Doucette M.M."/>
            <person name="Wainer B.H."/>
            <person name="Falcon-Perez J.M."/>
            <person name="Dell'Angelica E.C."/>
            <person name="Peden A.A."/>
            <person name="Werner E."/>
            <person name="Faundez V."/>
        </authorList>
    </citation>
    <scope>FUNCTION</scope>
</reference>
<reference key="11">
    <citation type="journal article" date="2007" name="Mol. Biol. Cell">
        <title>BLOC-1 is required for cargo-specific sorting from vacuolar early endosomes toward lysosome-related organelles.</title>
        <authorList>
            <person name="Setty S.R."/>
            <person name="Tenza D."/>
            <person name="Truschel S.T."/>
            <person name="Chou E."/>
            <person name="Sviderskaya E.V."/>
            <person name="Theos A.C."/>
            <person name="Lamoreux M.L."/>
            <person name="Di Pietro S.M."/>
            <person name="Starcevic M."/>
            <person name="Bennett D.C."/>
            <person name="Dell'Angelica E.C."/>
            <person name="Raposo G."/>
            <person name="Marks M.S."/>
        </authorList>
    </citation>
    <scope>IDENTIFICATION IN THE BLOC-1 COMPLEX</scope>
    <scope>FUNCTION</scope>
</reference>
<reference key="12">
    <citation type="journal article" date="2010" name="Cell">
        <title>A tissue-specific atlas of mouse protein phosphorylation and expression.</title>
        <authorList>
            <person name="Huttlin E.L."/>
            <person name="Jedrychowski M.P."/>
            <person name="Elias J.E."/>
            <person name="Goswami T."/>
            <person name="Rad R."/>
            <person name="Beausoleil S.A."/>
            <person name="Villen J."/>
            <person name="Haas W."/>
            <person name="Sowa M.E."/>
            <person name="Gygi S.P."/>
        </authorList>
    </citation>
    <scope>IDENTIFICATION BY MASS SPECTROMETRY [LARGE SCALE ANALYSIS]</scope>
    <source>
        <tissue>Brain</tissue>
        <tissue>Brown adipose tissue</tissue>
        <tissue>Kidney</tissue>
        <tissue>Liver</tissue>
        <tissue>Pancreas</tissue>
        <tissue>Spleen</tissue>
        <tissue>Testis</tissue>
    </source>
</reference>
<reference key="13">
    <citation type="journal article" date="2010" name="Mol. Psychiatry">
        <title>The dysbindin-containing complex (BLOC-1) in brain: developmental regulation, interaction with SNARE proteins and role in neurite outgrowth.</title>
        <authorList>
            <person name="Ghiani C.A."/>
            <person name="Starcevic M."/>
            <person name="Rodriguez-Fernandez I.A."/>
            <person name="Nazarian R."/>
            <person name="Cheli V.T."/>
            <person name="Chan L.N."/>
            <person name="Malvar J.S."/>
            <person name="de Vellis J."/>
            <person name="Sabatti C."/>
            <person name="Dell'Angelica E.C."/>
        </authorList>
    </citation>
    <scope>IDENTIFICATION IN THE BLOC-1 COMPLEX</scope>
    <scope>FUNCTION</scope>
    <scope>INTERACTION WITH SNAP25</scope>
</reference>
<reference key="14">
    <citation type="journal article" date="2011" name="Mol. Biol. Cell">
        <title>The schizophrenia susceptibility factor dysbindin and its associated complex sort cargoes from cell bodies to the synapse.</title>
        <authorList>
            <person name="Larimore J."/>
            <person name="Tornieri K."/>
            <person name="Ryder P.V."/>
            <person name="Gokhale A."/>
            <person name="Zlatic S.A."/>
            <person name="Craige B."/>
            <person name="Lee J.D."/>
            <person name="Talbot K."/>
            <person name="Pare J.F."/>
            <person name="Smith Y."/>
            <person name="Faundez V."/>
        </authorList>
    </citation>
    <scope>FUNCTION</scope>
</reference>
<accession>Q9R0C0</accession>
<accession>A2ATW6</accession>
<accession>Q3TUT4</accession>
<accession>Q91VG4</accession>
<name>BL1S6_MOUSE</name>
<protein>
    <recommendedName>
        <fullName>Biogenesis of lysosome-related organelles complex 1 subunit 6</fullName>
        <shortName>BLOC-1 subunit 6</shortName>
    </recommendedName>
    <alternativeName>
        <fullName>Pallid protein</fullName>
    </alternativeName>
    <alternativeName>
        <fullName>Pallidin</fullName>
    </alternativeName>
    <alternativeName>
        <fullName>Syntaxin 13-interacting protein</fullName>
    </alternativeName>
</protein>
<gene>
    <name type="primary">Bloc1s6</name>
    <name type="synonym">P2</name>
    <name type="synonym">Pa</name>
    <name type="synonym">Pldn</name>
</gene>
<proteinExistence type="evidence at protein level"/>
<sequence length="172" mass="19682">MSVPEPPPPDGVLTGPSDSLEAGEPTPGLSDTSPDEGLIEDFPVDDRAVEHLVGGLLSHYLPDLQRSKRALQELTQNQVVLLDTLEQEISKFKECHSMLDINALFTEAKHYHAKLVTIRKEMLLLHEKTSKLKKRALKLQQKRQREELEREQQREKEFEREKQLTAKPAKRT</sequence>
<evidence type="ECO:0000250" key="1"/>
<evidence type="ECO:0000250" key="2">
    <source>
        <dbReference type="UniProtKB" id="Q9UL45"/>
    </source>
</evidence>
<evidence type="ECO:0000255" key="3"/>
<evidence type="ECO:0000256" key="4">
    <source>
        <dbReference type="SAM" id="MobiDB-lite"/>
    </source>
</evidence>
<evidence type="ECO:0000269" key="5">
    <source>
    </source>
</evidence>
<evidence type="ECO:0000269" key="6">
    <source>
    </source>
</evidence>
<evidence type="ECO:0000269" key="7">
    <source>
    </source>
</evidence>
<evidence type="ECO:0000269" key="8">
    <source>
    </source>
</evidence>
<evidence type="ECO:0000269" key="9">
    <source>
    </source>
</evidence>
<evidence type="ECO:0000269" key="10">
    <source>
    </source>
</evidence>
<evidence type="ECO:0000269" key="11">
    <source>
    </source>
</evidence>
<evidence type="ECO:0000269" key="12">
    <source>
    </source>
</evidence>
<evidence type="ECO:0000269" key="13">
    <source>
    </source>
</evidence>
<evidence type="ECO:0000269" key="14">
    <source>
    </source>
</evidence>
<evidence type="ECO:0000303" key="15">
    <source>
    </source>
</evidence>
<evidence type="ECO:0000305" key="16"/>
<dbReference type="EMBL" id="AF079530">
    <property type="protein sequence ID" value="AAF09262.1"/>
    <property type="molecule type" value="mRNA"/>
</dbReference>
<dbReference type="EMBL" id="AF082574">
    <property type="protein sequence ID" value="AAF42469.1"/>
    <property type="molecule type" value="Genomic_DNA"/>
</dbReference>
<dbReference type="EMBL" id="AF082571">
    <property type="protein sequence ID" value="AAF42469.1"/>
    <property type="status" value="JOINED"/>
    <property type="molecule type" value="Genomic_DNA"/>
</dbReference>
<dbReference type="EMBL" id="AF082572">
    <property type="protein sequence ID" value="AAF42469.1"/>
    <property type="status" value="JOINED"/>
    <property type="molecule type" value="Genomic_DNA"/>
</dbReference>
<dbReference type="EMBL" id="AF082573">
    <property type="protein sequence ID" value="AAF42469.1"/>
    <property type="status" value="JOINED"/>
    <property type="molecule type" value="Genomic_DNA"/>
</dbReference>
<dbReference type="EMBL" id="AK038381">
    <property type="protein sequence ID" value="BAC29977.1"/>
    <property type="molecule type" value="mRNA"/>
</dbReference>
<dbReference type="EMBL" id="AK077720">
    <property type="protein sequence ID" value="BAC36979.1"/>
    <property type="molecule type" value="mRNA"/>
</dbReference>
<dbReference type="EMBL" id="AK147116">
    <property type="protein sequence ID" value="BAE27688.1"/>
    <property type="molecule type" value="mRNA"/>
</dbReference>
<dbReference type="EMBL" id="AK160580">
    <property type="protein sequence ID" value="BAE35887.1"/>
    <property type="molecule type" value="mRNA"/>
</dbReference>
<dbReference type="EMBL" id="AL928950">
    <property type="status" value="NOT_ANNOTATED_CDS"/>
    <property type="molecule type" value="Genomic_DNA"/>
</dbReference>
<dbReference type="EMBL" id="BC016554">
    <property type="protein sequence ID" value="AAH16554.1"/>
    <property type="molecule type" value="mRNA"/>
</dbReference>
<dbReference type="CCDS" id="CCDS16668.1">
    <molecule id="Q9R0C0-1"/>
</dbReference>
<dbReference type="RefSeq" id="NP_062762.1">
    <molecule id="Q9R0C0-1"/>
    <property type="nucleotide sequence ID" value="NM_019788.3"/>
</dbReference>
<dbReference type="SMR" id="Q9R0C0"/>
<dbReference type="BioGRID" id="202009">
    <property type="interactions" value="3"/>
</dbReference>
<dbReference type="ComplexPortal" id="CPX-1913">
    <property type="entry name" value="BLOC-1 complex"/>
</dbReference>
<dbReference type="CORUM" id="Q9R0C0"/>
<dbReference type="FunCoup" id="Q9R0C0">
    <property type="interactions" value="2686"/>
</dbReference>
<dbReference type="STRING" id="10090.ENSMUSP00000005954"/>
<dbReference type="GlyGen" id="Q9R0C0">
    <property type="glycosylation" value="1 site"/>
</dbReference>
<dbReference type="PhosphoSitePlus" id="Q9R0C0"/>
<dbReference type="PaxDb" id="10090-ENSMUSP00000005954"/>
<dbReference type="PeptideAtlas" id="Q9R0C0"/>
<dbReference type="ProteomicsDB" id="281693">
    <molecule id="Q9R0C0-1"/>
</dbReference>
<dbReference type="ProteomicsDB" id="281694">
    <molecule id="Q9R0C0-2"/>
</dbReference>
<dbReference type="Pumba" id="Q9R0C0"/>
<dbReference type="Antibodypedia" id="24448">
    <property type="antibodies" value="220 antibodies from 30 providers"/>
</dbReference>
<dbReference type="DNASU" id="18457"/>
<dbReference type="Ensembl" id="ENSMUST00000005954.9">
    <molecule id="Q9R0C0-1"/>
    <property type="protein sequence ID" value="ENSMUSP00000005954.9"/>
    <property type="gene ID" value="ENSMUSG00000005804.15"/>
</dbReference>
<dbReference type="GeneID" id="18457"/>
<dbReference type="KEGG" id="mmu:18457"/>
<dbReference type="UCSC" id="uc008mbf.1">
    <molecule id="Q9R0C0-1"/>
    <property type="organism name" value="mouse"/>
</dbReference>
<dbReference type="AGR" id="MGI:1927580"/>
<dbReference type="CTD" id="26258"/>
<dbReference type="MGI" id="MGI:1927580">
    <property type="gene designation" value="Bloc1s6"/>
</dbReference>
<dbReference type="VEuPathDB" id="HostDB:ENSMUSG00000005804"/>
<dbReference type="eggNOG" id="ENOG502RZNC">
    <property type="taxonomic scope" value="Eukaryota"/>
</dbReference>
<dbReference type="GeneTree" id="ENSGT00510000047812"/>
<dbReference type="HOGENOM" id="CLU_115118_1_0_1"/>
<dbReference type="InParanoid" id="Q9R0C0"/>
<dbReference type="OMA" id="MMSDVKR"/>
<dbReference type="OrthoDB" id="19659at2759"/>
<dbReference type="PhylomeDB" id="Q9R0C0"/>
<dbReference type="TreeFam" id="TF325188"/>
<dbReference type="Reactome" id="R-MMU-432722">
    <property type="pathway name" value="Golgi Associated Vesicle Biogenesis"/>
</dbReference>
<dbReference type="BioGRID-ORCS" id="18457">
    <property type="hits" value="3 hits in 78 CRISPR screens"/>
</dbReference>
<dbReference type="ChiTaRS" id="Bloc1s6">
    <property type="organism name" value="mouse"/>
</dbReference>
<dbReference type="PRO" id="PR:Q9R0C0"/>
<dbReference type="Proteomes" id="UP000000589">
    <property type="component" value="Chromosome 2"/>
</dbReference>
<dbReference type="RNAct" id="Q9R0C0">
    <property type="molecule type" value="protein"/>
</dbReference>
<dbReference type="Bgee" id="ENSMUSG00000005804">
    <property type="expression patterns" value="Expressed in interventricular septum and 259 other cell types or tissues"/>
</dbReference>
<dbReference type="GO" id="GO:1904115">
    <property type="term" value="C:axon cytoplasm"/>
    <property type="evidence" value="ECO:0007669"/>
    <property type="project" value="GOC"/>
</dbReference>
<dbReference type="GO" id="GO:0031083">
    <property type="term" value="C:BLOC-1 complex"/>
    <property type="evidence" value="ECO:0000314"/>
    <property type="project" value="UniProtKB"/>
</dbReference>
<dbReference type="GO" id="GO:0044291">
    <property type="term" value="C:cell-cell contact zone"/>
    <property type="evidence" value="ECO:0000314"/>
    <property type="project" value="MGI"/>
</dbReference>
<dbReference type="GO" id="GO:0070938">
    <property type="term" value="C:contractile ring"/>
    <property type="evidence" value="ECO:0000314"/>
    <property type="project" value="MGI"/>
</dbReference>
<dbReference type="GO" id="GO:0005737">
    <property type="term" value="C:cytoplasm"/>
    <property type="evidence" value="ECO:0000250"/>
    <property type="project" value="UniProtKB"/>
</dbReference>
<dbReference type="GO" id="GO:0005768">
    <property type="term" value="C:endosome"/>
    <property type="evidence" value="ECO:0000314"/>
    <property type="project" value="MGI"/>
</dbReference>
<dbReference type="GO" id="GO:0031941">
    <property type="term" value="C:filamentous actin"/>
    <property type="evidence" value="ECO:0000314"/>
    <property type="project" value="MGI"/>
</dbReference>
<dbReference type="GO" id="GO:0005925">
    <property type="term" value="C:focal adhesion"/>
    <property type="evidence" value="ECO:0000314"/>
    <property type="project" value="MGI"/>
</dbReference>
<dbReference type="GO" id="GO:0043227">
    <property type="term" value="C:membrane-bounded organelle"/>
    <property type="evidence" value="ECO:0000250"/>
    <property type="project" value="UniProtKB"/>
</dbReference>
<dbReference type="GO" id="GO:1990742">
    <property type="term" value="C:microvesicle"/>
    <property type="evidence" value="ECO:0000314"/>
    <property type="project" value="MGI"/>
</dbReference>
<dbReference type="GO" id="GO:0001726">
    <property type="term" value="C:ruffle"/>
    <property type="evidence" value="ECO:0000314"/>
    <property type="project" value="MGI"/>
</dbReference>
<dbReference type="GO" id="GO:0031201">
    <property type="term" value="C:SNARE complex"/>
    <property type="evidence" value="ECO:0007669"/>
    <property type="project" value="Ensembl"/>
</dbReference>
<dbReference type="GO" id="GO:0001725">
    <property type="term" value="C:stress fiber"/>
    <property type="evidence" value="ECO:0000314"/>
    <property type="project" value="MGI"/>
</dbReference>
<dbReference type="GO" id="GO:0030133">
    <property type="term" value="C:transport vesicle"/>
    <property type="evidence" value="ECO:0000250"/>
    <property type="project" value="UniProtKB"/>
</dbReference>
<dbReference type="GO" id="GO:0051015">
    <property type="term" value="F:actin filament binding"/>
    <property type="evidence" value="ECO:0000250"/>
    <property type="project" value="UniProtKB"/>
</dbReference>
<dbReference type="GO" id="GO:0060090">
    <property type="term" value="F:molecular adaptor activity"/>
    <property type="evidence" value="ECO:0000314"/>
    <property type="project" value="MGI"/>
</dbReference>
<dbReference type="GO" id="GO:0042803">
    <property type="term" value="F:protein homodimerization activity"/>
    <property type="evidence" value="ECO:0000250"/>
    <property type="project" value="UniProtKB"/>
</dbReference>
<dbReference type="GO" id="GO:0051017">
    <property type="term" value="P:actin filament bundle assembly"/>
    <property type="evidence" value="ECO:0000315"/>
    <property type="project" value="MGI"/>
</dbReference>
<dbReference type="GO" id="GO:0046085">
    <property type="term" value="P:adenosine metabolic process"/>
    <property type="evidence" value="ECO:0000315"/>
    <property type="project" value="MGI"/>
</dbReference>
<dbReference type="GO" id="GO:0006520">
    <property type="term" value="P:amino acid metabolic process"/>
    <property type="evidence" value="ECO:0000315"/>
    <property type="project" value="MGI"/>
</dbReference>
<dbReference type="GO" id="GO:0008089">
    <property type="term" value="P:anterograde axonal transport"/>
    <property type="evidence" value="ECO:0000315"/>
    <property type="project" value="UniProtKB"/>
</dbReference>
<dbReference type="GO" id="GO:0048490">
    <property type="term" value="P:anterograde synaptic vesicle transport"/>
    <property type="evidence" value="ECO:0000315"/>
    <property type="project" value="UniProtKB"/>
</dbReference>
<dbReference type="GO" id="GO:0046034">
    <property type="term" value="P:ATP metabolic process"/>
    <property type="evidence" value="ECO:0000315"/>
    <property type="project" value="MGI"/>
</dbReference>
<dbReference type="GO" id="GO:0007596">
    <property type="term" value="P:blood coagulation"/>
    <property type="evidence" value="ECO:0000315"/>
    <property type="project" value="MGI"/>
</dbReference>
<dbReference type="GO" id="GO:0002936">
    <property type="term" value="P:bradykinin biosynthetic process"/>
    <property type="evidence" value="ECO:0000315"/>
    <property type="project" value="MGI"/>
</dbReference>
<dbReference type="GO" id="GO:0071364">
    <property type="term" value="P:cellular response to epidermal growth factor stimulus"/>
    <property type="evidence" value="ECO:0000314"/>
    <property type="project" value="MGI"/>
</dbReference>
<dbReference type="GO" id="GO:0060271">
    <property type="term" value="P:cilium assembly"/>
    <property type="evidence" value="ECO:0000315"/>
    <property type="project" value="MGI"/>
</dbReference>
<dbReference type="GO" id="GO:0042745">
    <property type="term" value="P:circadian sleep/wake cycle"/>
    <property type="evidence" value="ECO:0000315"/>
    <property type="project" value="MGI"/>
</dbReference>
<dbReference type="GO" id="GO:0021542">
    <property type="term" value="P:dentate gyrus development"/>
    <property type="evidence" value="ECO:0000315"/>
    <property type="project" value="MGI"/>
</dbReference>
<dbReference type="GO" id="GO:0035646">
    <property type="term" value="P:endosome to melanosome transport"/>
    <property type="evidence" value="ECO:0000250"/>
    <property type="project" value="UniProtKB"/>
</dbReference>
<dbReference type="GO" id="GO:0003158">
    <property type="term" value="P:endothelium development"/>
    <property type="evidence" value="ECO:0000315"/>
    <property type="project" value="MGI"/>
</dbReference>
<dbReference type="GO" id="GO:0010467">
    <property type="term" value="P:gene expression"/>
    <property type="evidence" value="ECO:0000315"/>
    <property type="project" value="MGI"/>
</dbReference>
<dbReference type="GO" id="GO:0006536">
    <property type="term" value="P:glutamate metabolic process"/>
    <property type="evidence" value="ECO:0000315"/>
    <property type="project" value="MGI"/>
</dbReference>
<dbReference type="GO" id="GO:0006541">
    <property type="term" value="P:glutamine metabolic process"/>
    <property type="evidence" value="ECO:0000315"/>
    <property type="project" value="MGI"/>
</dbReference>
<dbReference type="GO" id="GO:0048872">
    <property type="term" value="P:homeostasis of number of cells"/>
    <property type="evidence" value="ECO:0000315"/>
    <property type="project" value="MGI"/>
</dbReference>
<dbReference type="GO" id="GO:0021854">
    <property type="term" value="P:hypothalamus development"/>
    <property type="evidence" value="ECO:0000315"/>
    <property type="project" value="MGI"/>
</dbReference>
<dbReference type="GO" id="GO:0033484">
    <property type="term" value="P:intracellular nitric oxide homeostasis"/>
    <property type="evidence" value="ECO:0000315"/>
    <property type="project" value="MGI"/>
</dbReference>
<dbReference type="GO" id="GO:0001822">
    <property type="term" value="P:kidney development"/>
    <property type="evidence" value="ECO:0000315"/>
    <property type="project" value="MGI"/>
</dbReference>
<dbReference type="GO" id="GO:0055088">
    <property type="term" value="P:lipid homeostasis"/>
    <property type="evidence" value="ECO:0000315"/>
    <property type="project" value="MGI"/>
</dbReference>
<dbReference type="GO" id="GO:0006629">
    <property type="term" value="P:lipid metabolic process"/>
    <property type="evidence" value="ECO:0000315"/>
    <property type="project" value="MGI"/>
</dbReference>
<dbReference type="GO" id="GO:0048286">
    <property type="term" value="P:lung alveolus development"/>
    <property type="evidence" value="ECO:0000315"/>
    <property type="project" value="MGI"/>
</dbReference>
<dbReference type="GO" id="GO:0030324">
    <property type="term" value="P:lung development"/>
    <property type="evidence" value="ECO:0000315"/>
    <property type="project" value="MGI"/>
</dbReference>
<dbReference type="GO" id="GO:0030318">
    <property type="term" value="P:melanocyte differentiation"/>
    <property type="evidence" value="ECO:0000315"/>
    <property type="project" value="MGI"/>
</dbReference>
<dbReference type="GO" id="GO:0032438">
    <property type="term" value="P:melanosome organization"/>
    <property type="evidence" value="ECO:0000303"/>
    <property type="project" value="ComplexPortal"/>
</dbReference>
<dbReference type="GO" id="GO:0032402">
    <property type="term" value="P:melanosome transport"/>
    <property type="evidence" value="ECO:0000250"/>
    <property type="project" value="UniProtKB"/>
</dbReference>
<dbReference type="GO" id="GO:0061025">
    <property type="term" value="P:membrane fusion"/>
    <property type="evidence" value="ECO:0000353"/>
    <property type="project" value="MGI"/>
</dbReference>
<dbReference type="GO" id="GO:0007613">
    <property type="term" value="P:memory"/>
    <property type="evidence" value="ECO:0000315"/>
    <property type="project" value="MGI"/>
</dbReference>
<dbReference type="GO" id="GO:0035264">
    <property type="term" value="P:multicellular organism growth"/>
    <property type="evidence" value="ECO:0000315"/>
    <property type="project" value="MGI"/>
</dbReference>
<dbReference type="GO" id="GO:0031175">
    <property type="term" value="P:neuron projection development"/>
    <property type="evidence" value="ECO:0000315"/>
    <property type="project" value="UniProtKB"/>
</dbReference>
<dbReference type="GO" id="GO:0006644">
    <property type="term" value="P:phospholipid metabolic process"/>
    <property type="evidence" value="ECO:0000315"/>
    <property type="project" value="MGI"/>
</dbReference>
<dbReference type="GO" id="GO:0043473">
    <property type="term" value="P:pigmentation"/>
    <property type="evidence" value="ECO:0000315"/>
    <property type="project" value="MGI"/>
</dbReference>
<dbReference type="GO" id="GO:0032816">
    <property type="term" value="P:positive regulation of natural killer cell activation"/>
    <property type="evidence" value="ECO:0000315"/>
    <property type="project" value="MGI"/>
</dbReference>
<dbReference type="GO" id="GO:0050942">
    <property type="term" value="P:positive regulation of pigment cell differentiation"/>
    <property type="evidence" value="ECO:0000250"/>
    <property type="project" value="UniProtKB"/>
</dbReference>
<dbReference type="GO" id="GO:0009306">
    <property type="term" value="P:protein secretion"/>
    <property type="evidence" value="ECO:0000315"/>
    <property type="project" value="MGI"/>
</dbReference>
<dbReference type="GO" id="GO:0006605">
    <property type="term" value="P:protein targeting"/>
    <property type="evidence" value="ECO:0000315"/>
    <property type="project" value="MGI"/>
</dbReference>
<dbReference type="GO" id="GO:0071806">
    <property type="term" value="P:protein transmembrane transport"/>
    <property type="evidence" value="ECO:0000315"/>
    <property type="project" value="MGI"/>
</dbReference>
<dbReference type="GO" id="GO:0003016">
    <property type="term" value="P:respiratory system process"/>
    <property type="evidence" value="ECO:0000315"/>
    <property type="project" value="MGI"/>
</dbReference>
<dbReference type="GO" id="GO:1905144">
    <property type="term" value="P:response to acetylcholine"/>
    <property type="evidence" value="ECO:0000315"/>
    <property type="project" value="MGI"/>
</dbReference>
<dbReference type="GO" id="GO:0014823">
    <property type="term" value="P:response to activity"/>
    <property type="evidence" value="ECO:0000315"/>
    <property type="project" value="MGI"/>
</dbReference>
<dbReference type="GO" id="GO:0009410">
    <property type="term" value="P:response to xenobiotic stimulus"/>
    <property type="evidence" value="ECO:0000315"/>
    <property type="project" value="MGI"/>
</dbReference>
<dbReference type="GO" id="GO:0033299">
    <property type="term" value="P:secretion of lysosomal enzymes"/>
    <property type="evidence" value="ECO:0000315"/>
    <property type="project" value="MGI"/>
</dbReference>
<dbReference type="GO" id="GO:0042311">
    <property type="term" value="P:vasodilation"/>
    <property type="evidence" value="ECO:0000315"/>
    <property type="project" value="MGI"/>
</dbReference>
<dbReference type="GO" id="GO:0006904">
    <property type="term" value="P:vesicle docking involved in exocytosis"/>
    <property type="evidence" value="ECO:0000304"/>
    <property type="project" value="MGI"/>
</dbReference>
<dbReference type="GO" id="GO:0006906">
    <property type="term" value="P:vesicle fusion"/>
    <property type="evidence" value="ECO:0000304"/>
    <property type="project" value="MGI"/>
</dbReference>
<dbReference type="InterPro" id="IPR017242">
    <property type="entry name" value="BLOC-1_pallidin"/>
</dbReference>
<dbReference type="InterPro" id="IPR028119">
    <property type="entry name" value="Snapin/Pallidin/Snn1"/>
</dbReference>
<dbReference type="PANTHER" id="PTHR31328">
    <property type="entry name" value="BIOGENESIS OF LYSOSOME-RELATED ORGANELLES COMPLEX 1 SUBUNIT 6"/>
    <property type="match status" value="1"/>
</dbReference>
<dbReference type="PANTHER" id="PTHR31328:SF2">
    <property type="entry name" value="BIOGENESIS OF LYSOSOME-RELATED ORGANELLES COMPLEX 1 SUBUNIT 6"/>
    <property type="match status" value="1"/>
</dbReference>
<dbReference type="Pfam" id="PF14712">
    <property type="entry name" value="Snapin_Pallidin"/>
    <property type="match status" value="1"/>
</dbReference>
<dbReference type="PIRSF" id="PIRSF037609">
    <property type="entry name" value="BLOC-1_complex_pallidin"/>
    <property type="match status" value="1"/>
</dbReference>
<comment type="function">
    <text evidence="11 12 13 14">Component of the BLOC-1 complex, a complex that is required for normal biogenesis of lysosome-related organelles (LRO), such as platelet dense granules and melanosomes. In concert with the AP-3 complex, the BLOC-1 complex is required to target membrane protein cargos into vesicles assembled at cell bodies for delivery into neurites and nerve terminals. The BLOC-1 complex, in association with SNARE proteins, is also proposed to be involved in neurite extension. May play a role in intracellular vesicle trafficking, particularly in the vesicle-docking and fusion process.</text>
</comment>
<comment type="subunit">
    <text evidence="1 5 6 8 9 12 13">Octamer composed of one copy each BLOC1S1, BLOC1S2, BLOC1S3, BLOC1S4, BLOC1S5, BLOC1S6, DTNBP1/BLOC1S7 and SNAPIN/BLOC1S8. Interacts with SNAP47 (By similarity). Homodimer. Component of the biogenesis of lysosome-related organelles complex 1 (BLOC-1) composed of BLOC1S1, BLOC1S2, BLOC1S3, BLOC1S4, BLOC1S5, BLOC1S6, DTNBP1/BLOC1S7 and SNAPIN/BLOC1S8. Interacts with BLOC1S4, BLOC1S5, DTNBP1/BLOC1S7, F-actin, SNAP25 isoform 1 and STX12.</text>
</comment>
<comment type="subcellular location">
    <subcellularLocation>
        <location evidence="2">Cytoplasm</location>
    </subcellularLocation>
    <subcellularLocation>
        <location evidence="2">Membrane</location>
        <topology evidence="2">Peripheral membrane protein</topology>
    </subcellularLocation>
    <text evidence="2">It can exist as a soluble protein as well as a peripheral membrane protein.</text>
</comment>
<comment type="alternative products">
    <event type="alternative splicing"/>
    <isoform>
        <id>Q9R0C0-1</id>
        <name>1</name>
        <sequence type="displayed"/>
    </isoform>
    <isoform>
        <id>Q9R0C0-2</id>
        <name>2</name>
        <sequence type="described" ref="VSP_009295 VSP_009296"/>
    </isoform>
    <isoform>
        <id>Q9R0C0-3</id>
        <name>3</name>
        <sequence type="not described"/>
    </isoform>
</comment>
<comment type="tissue specificity">
    <text evidence="5 6 7">Expressed in liver, kidney and spleen (at protein level). Ubiquitously expressed, with the highest expression levels observed in brain, heart, liver and kidney.</text>
</comment>
<comment type="PTM">
    <text evidence="1">Phosphorylated.</text>
</comment>
<comment type="disease">
    <text evidence="5">Defects in Pldn are the cause of the pallid (pa) phenotype that is characterized by an altered formation or function of intracellular storage granules in melanocytes, platelets, and lysosomes in kidney. Pallid mice have a prolonged bleeding time owing to the inability of immature platelet dense granules to accumulate normal amounts of ATP, ADP, and serotonin. Pa animals also suffer from pigment dilution, kidney lysosomal enzyme elevation and serum alpha1-antitrypsin activity deficiency. Finally, pallid mice exhibit defects in otolith formation that lead to balance abnormalities.</text>
</comment>
<comment type="miscellaneous">
    <molecule>Isoform 2</molecule>
    <text evidence="16">May be due to a competing acceptor splice site.</text>
</comment>
<comment type="miscellaneous">
    <molecule>Isoform 3</molecule>
    <text evidence="16">May be due to exon 2 skipping.</text>
</comment>
<comment type="similarity">
    <text evidence="16">Belongs to the BLOC1S6 family.</text>
</comment>
<feature type="chain" id="PRO_0000058459" description="Biogenesis of lysosome-related organelles complex 1 subunit 6">
    <location>
        <begin position="1"/>
        <end position="172"/>
    </location>
</feature>
<feature type="region of interest" description="Disordered" evidence="4">
    <location>
        <begin position="1"/>
        <end position="37"/>
    </location>
</feature>
<feature type="region of interest" description="Disordered" evidence="4">
    <location>
        <begin position="141"/>
        <end position="172"/>
    </location>
</feature>
<feature type="coiled-coil region" evidence="3">
    <location>
        <begin position="63"/>
        <end position="167"/>
    </location>
</feature>
<feature type="compositionally biased region" description="Pro residues" evidence="4">
    <location>
        <begin position="1"/>
        <end position="10"/>
    </location>
</feature>
<feature type="compositionally biased region" description="Basic and acidic residues" evidence="4">
    <location>
        <begin position="143"/>
        <end position="164"/>
    </location>
</feature>
<feature type="splice variant" id="VSP_009295" description="In isoform 2." evidence="15">
    <original>QNQVV</original>
    <variation>TKLCY</variation>
    <location>
        <begin position="76"/>
        <end position="80"/>
    </location>
</feature>
<feature type="splice variant" id="VSP_009296" description="In isoform 2." evidence="15">
    <location>
        <begin position="81"/>
        <end position="172"/>
    </location>
</feature>
<feature type="sequence variant" description="In strain: C57BL/6J-pa mutants." evidence="5">
    <original>T</original>
    <variation>M</variation>
    <location>
        <position position="14"/>
    </location>
</feature>
<feature type="sequence variant" description="In strain: BALB/c, CBA and C57BL/6J-pa mutants." evidence="5 10">
    <original>T</original>
    <variation>M</variation>
    <location>
        <position position="32"/>
    </location>
</feature>
<keyword id="KW-0025">Alternative splicing</keyword>
<keyword id="KW-0175">Coiled coil</keyword>
<keyword id="KW-0963">Cytoplasm</keyword>
<keyword id="KW-0472">Membrane</keyword>
<keyword id="KW-0597">Phosphoprotein</keyword>
<keyword id="KW-1185">Reference proteome</keyword>
<organism>
    <name type="scientific">Mus musculus</name>
    <name type="common">Mouse</name>
    <dbReference type="NCBI Taxonomy" id="10090"/>
    <lineage>
        <taxon>Eukaryota</taxon>
        <taxon>Metazoa</taxon>
        <taxon>Chordata</taxon>
        <taxon>Craniata</taxon>
        <taxon>Vertebrata</taxon>
        <taxon>Euteleostomi</taxon>
        <taxon>Mammalia</taxon>
        <taxon>Eutheria</taxon>
        <taxon>Euarchontoglires</taxon>
        <taxon>Glires</taxon>
        <taxon>Rodentia</taxon>
        <taxon>Myomorpha</taxon>
        <taxon>Muroidea</taxon>
        <taxon>Muridae</taxon>
        <taxon>Murinae</taxon>
        <taxon>Mus</taxon>
        <taxon>Mus</taxon>
    </lineage>
</organism>